<reference key="1">
    <citation type="submission" date="2006-12" db="EMBL/GenBank/DDBJ databases">
        <title>Complete sequence of Shewanella sp. W3-18-1.</title>
        <authorList>
            <consortium name="US DOE Joint Genome Institute"/>
            <person name="Copeland A."/>
            <person name="Lucas S."/>
            <person name="Lapidus A."/>
            <person name="Barry K."/>
            <person name="Detter J.C."/>
            <person name="Glavina del Rio T."/>
            <person name="Hammon N."/>
            <person name="Israni S."/>
            <person name="Dalin E."/>
            <person name="Tice H."/>
            <person name="Pitluck S."/>
            <person name="Chain P."/>
            <person name="Malfatti S."/>
            <person name="Shin M."/>
            <person name="Vergez L."/>
            <person name="Schmutz J."/>
            <person name="Larimer F."/>
            <person name="Land M."/>
            <person name="Hauser L."/>
            <person name="Kyrpides N."/>
            <person name="Lykidis A."/>
            <person name="Tiedje J."/>
            <person name="Richardson P."/>
        </authorList>
    </citation>
    <scope>NUCLEOTIDE SEQUENCE [LARGE SCALE GENOMIC DNA]</scope>
    <source>
        <strain>W3-18-1</strain>
    </source>
</reference>
<feature type="chain" id="PRO_0000339855" description="UPF0597 protein Sputw3181_2955">
    <location>
        <begin position="1"/>
        <end position="424"/>
    </location>
</feature>
<name>Y2955_SHESW</name>
<proteinExistence type="inferred from homology"/>
<accession>A1RM77</accession>
<gene>
    <name type="ordered locus">Sputw3181_2955</name>
</gene>
<evidence type="ECO:0000255" key="1">
    <source>
        <dbReference type="HAMAP-Rule" id="MF_01845"/>
    </source>
</evidence>
<organism>
    <name type="scientific">Shewanella sp. (strain W3-18-1)</name>
    <dbReference type="NCBI Taxonomy" id="351745"/>
    <lineage>
        <taxon>Bacteria</taxon>
        <taxon>Pseudomonadati</taxon>
        <taxon>Pseudomonadota</taxon>
        <taxon>Gammaproteobacteria</taxon>
        <taxon>Alteromonadales</taxon>
        <taxon>Shewanellaceae</taxon>
        <taxon>Shewanella</taxon>
    </lineage>
</organism>
<protein>
    <recommendedName>
        <fullName evidence="1">UPF0597 protein Sputw3181_2955</fullName>
    </recommendedName>
</protein>
<dbReference type="EMBL" id="CP000503">
    <property type="protein sequence ID" value="ABM25772.1"/>
    <property type="molecule type" value="Genomic_DNA"/>
</dbReference>
<dbReference type="RefSeq" id="WP_011790226.1">
    <property type="nucleotide sequence ID" value="NC_008750.1"/>
</dbReference>
<dbReference type="SMR" id="A1RM77"/>
<dbReference type="KEGG" id="shw:Sputw3181_2955"/>
<dbReference type="HOGENOM" id="CLU_051840_0_0_6"/>
<dbReference type="Proteomes" id="UP000002597">
    <property type="component" value="Chromosome"/>
</dbReference>
<dbReference type="GO" id="GO:0080146">
    <property type="term" value="F:L-cysteine desulfhydrase activity"/>
    <property type="evidence" value="ECO:0007669"/>
    <property type="project" value="TreeGrafter"/>
</dbReference>
<dbReference type="GO" id="GO:0019450">
    <property type="term" value="P:L-cysteine catabolic process to pyruvate"/>
    <property type="evidence" value="ECO:0007669"/>
    <property type="project" value="TreeGrafter"/>
</dbReference>
<dbReference type="HAMAP" id="MF_01845">
    <property type="entry name" value="UPF0597"/>
    <property type="match status" value="1"/>
</dbReference>
<dbReference type="InterPro" id="IPR005130">
    <property type="entry name" value="Ser_deHydtase-like_asu"/>
</dbReference>
<dbReference type="InterPro" id="IPR021144">
    <property type="entry name" value="UPF0597"/>
</dbReference>
<dbReference type="PANTHER" id="PTHR30501">
    <property type="entry name" value="UPF0597 PROTEIN YHAM"/>
    <property type="match status" value="1"/>
</dbReference>
<dbReference type="PANTHER" id="PTHR30501:SF2">
    <property type="entry name" value="UPF0597 PROTEIN YHAM"/>
    <property type="match status" value="1"/>
</dbReference>
<dbReference type="Pfam" id="PF03313">
    <property type="entry name" value="SDH_alpha"/>
    <property type="match status" value="1"/>
</dbReference>
<dbReference type="PIRSF" id="PIRSF006054">
    <property type="entry name" value="UCP006054"/>
    <property type="match status" value="1"/>
</dbReference>
<comment type="similarity">
    <text evidence="1">Belongs to the UPF0597 family.</text>
</comment>
<sequence length="424" mass="44025">MNPLWQQYIQILNQVVKPALGCTEPIAAAYASAVARTLLGIVPEAISVQVSDNLYKNSMGVYVPGTGKIGLAIAAAAGAIAGNAEAGLEVLAAITPEQVAQAQDLIDAGKVKVERTETEEFIYCCVTLKAGEQEALVKICGGHTLIAEKRLNGEPVFTADNAQSAATGSICDGIDISIKSIYQFAQEVPFDQIKFILKASELNGKLSDEGMAKPYGLEVGRTMKSGIAAGIIGEDLLNKIVMLTAAASDARMGGANLPAMSNLGSGNQGIAATIPVVLTAQCYNVTEEKLARALIMSHLGAIYIKSHYPPLSAFCGNTVTSAAASMAMVYIAGGSFEQSCFAIQNVISDSSGMVCDGAKASCAMKVSTSSSAAVRSFLMALNSQNVSGQGIIATDVEKTIKNIGKMILNGMSSTDVTIIDIMST</sequence>